<sequence>MEDYKQRIKNKLNVVPMEPGCYLMKDRNDQVIYVGKAKKLRNRLRSYFTGAHDAKTTRLVGEIRRFEFIVTSSETESLLLELNLIKQYQPRYNILLKDDKSYPFIKITKEKYPRLLVTRTVKQGTGKYFGPYPNAYSAQETKKLLDRIYPYRKCDKMPDKLCLYYHIGQCLGPCVYDVDLSKYAQMTKEITDFLNGEDKTILKSLEERMLTASESLDFERAKEYRDLIQHIQNLTNKQKIMSSDKTIRDVFGYCVDKGWMCIQVFFIRQGNMIKRDTTMIPLQQTEEEEFYTFIGQFYSLNQHILPKEVHVPRNLDKEMIQSVVDTKIVQPARGPKKDMVDLAAHNAKVSLNNKFELISRDESRTIKAIEELGTQMGIQTPIRIEAFDNSNIQGVDPVSAMVTFVDGKPDKKNYRKYKIKTVKGPDDYKSMREVVRRRYSRVLNEGLPLPDLIIVDGGKGHMNGVIDVLQNELGLDIPVAGLQKNDKHQTSELLYGASAEIVPLKKNSQAFYLLHRIQDEVHRFAITFHRQTRQKTGLKSILDDIDGIGNKRKTLLLRSFGSIKKMKEATLEDFKNIGIPENVAKNLHEQLHK</sequence>
<keyword id="KW-0963">Cytoplasm</keyword>
<keyword id="KW-0227">DNA damage</keyword>
<keyword id="KW-0228">DNA excision</keyword>
<keyword id="KW-0234">DNA repair</keyword>
<keyword id="KW-0267">Excision nuclease</keyword>
<keyword id="KW-0742">SOS response</keyword>
<proteinExistence type="inferred from homology"/>
<name>UVRC_STAA9</name>
<accession>A5IS32</accession>
<gene>
    <name evidence="1" type="primary">uvrC</name>
    <name type="ordered locus">SaurJH9_1205</name>
</gene>
<organism>
    <name type="scientific">Staphylococcus aureus (strain JH9)</name>
    <dbReference type="NCBI Taxonomy" id="359786"/>
    <lineage>
        <taxon>Bacteria</taxon>
        <taxon>Bacillati</taxon>
        <taxon>Bacillota</taxon>
        <taxon>Bacilli</taxon>
        <taxon>Bacillales</taxon>
        <taxon>Staphylococcaceae</taxon>
        <taxon>Staphylococcus</taxon>
    </lineage>
</organism>
<dbReference type="EMBL" id="CP000703">
    <property type="protein sequence ID" value="ABQ49005.1"/>
    <property type="molecule type" value="Genomic_DNA"/>
</dbReference>
<dbReference type="RefSeq" id="WP_000390524.1">
    <property type="nucleotide sequence ID" value="NC_009487.1"/>
</dbReference>
<dbReference type="SMR" id="A5IS32"/>
<dbReference type="KEGG" id="saj:SaurJH9_1205"/>
<dbReference type="HOGENOM" id="CLU_014841_3_2_9"/>
<dbReference type="GO" id="GO:0005737">
    <property type="term" value="C:cytoplasm"/>
    <property type="evidence" value="ECO:0007669"/>
    <property type="project" value="UniProtKB-SubCell"/>
</dbReference>
<dbReference type="GO" id="GO:0009380">
    <property type="term" value="C:excinuclease repair complex"/>
    <property type="evidence" value="ECO:0007669"/>
    <property type="project" value="InterPro"/>
</dbReference>
<dbReference type="GO" id="GO:0003677">
    <property type="term" value="F:DNA binding"/>
    <property type="evidence" value="ECO:0007669"/>
    <property type="project" value="UniProtKB-UniRule"/>
</dbReference>
<dbReference type="GO" id="GO:0009381">
    <property type="term" value="F:excinuclease ABC activity"/>
    <property type="evidence" value="ECO:0007669"/>
    <property type="project" value="UniProtKB-UniRule"/>
</dbReference>
<dbReference type="GO" id="GO:0006289">
    <property type="term" value="P:nucleotide-excision repair"/>
    <property type="evidence" value="ECO:0007669"/>
    <property type="project" value="UniProtKB-UniRule"/>
</dbReference>
<dbReference type="GO" id="GO:0009432">
    <property type="term" value="P:SOS response"/>
    <property type="evidence" value="ECO:0007669"/>
    <property type="project" value="UniProtKB-UniRule"/>
</dbReference>
<dbReference type="CDD" id="cd10434">
    <property type="entry name" value="GIY-YIG_UvrC_Cho"/>
    <property type="match status" value="1"/>
</dbReference>
<dbReference type="FunFam" id="3.30.420.340:FF:000002">
    <property type="entry name" value="UvrABC system protein C"/>
    <property type="match status" value="1"/>
</dbReference>
<dbReference type="FunFam" id="3.40.1440.10:FF:000001">
    <property type="entry name" value="UvrABC system protein C"/>
    <property type="match status" value="1"/>
</dbReference>
<dbReference type="FunFam" id="4.10.860.10:FF:000007">
    <property type="entry name" value="UvrABC system protein C"/>
    <property type="match status" value="1"/>
</dbReference>
<dbReference type="Gene3D" id="1.10.150.20">
    <property type="entry name" value="5' to 3' exonuclease, C-terminal subdomain"/>
    <property type="match status" value="1"/>
</dbReference>
<dbReference type="Gene3D" id="3.40.1440.10">
    <property type="entry name" value="GIY-YIG endonuclease"/>
    <property type="match status" value="1"/>
</dbReference>
<dbReference type="Gene3D" id="4.10.860.10">
    <property type="entry name" value="UVR domain"/>
    <property type="match status" value="1"/>
</dbReference>
<dbReference type="Gene3D" id="3.30.420.340">
    <property type="entry name" value="UvrC, RNAse H endonuclease domain"/>
    <property type="match status" value="1"/>
</dbReference>
<dbReference type="HAMAP" id="MF_00203">
    <property type="entry name" value="UvrC"/>
    <property type="match status" value="1"/>
</dbReference>
<dbReference type="InterPro" id="IPR000305">
    <property type="entry name" value="GIY-YIG_endonuc"/>
</dbReference>
<dbReference type="InterPro" id="IPR035901">
    <property type="entry name" value="GIY-YIG_endonuc_sf"/>
</dbReference>
<dbReference type="InterPro" id="IPR047296">
    <property type="entry name" value="GIY-YIG_UvrC_Cho"/>
</dbReference>
<dbReference type="InterPro" id="IPR010994">
    <property type="entry name" value="RuvA_2-like"/>
</dbReference>
<dbReference type="InterPro" id="IPR001943">
    <property type="entry name" value="UVR_dom"/>
</dbReference>
<dbReference type="InterPro" id="IPR036876">
    <property type="entry name" value="UVR_dom_sf"/>
</dbReference>
<dbReference type="InterPro" id="IPR050066">
    <property type="entry name" value="UvrABC_protein_C"/>
</dbReference>
<dbReference type="InterPro" id="IPR004791">
    <property type="entry name" value="UvrC"/>
</dbReference>
<dbReference type="InterPro" id="IPR001162">
    <property type="entry name" value="UvrC_RNase_H_dom"/>
</dbReference>
<dbReference type="InterPro" id="IPR038476">
    <property type="entry name" value="UvrC_RNase_H_dom_sf"/>
</dbReference>
<dbReference type="NCBIfam" id="TIGR00194">
    <property type="entry name" value="uvrC"/>
    <property type="match status" value="1"/>
</dbReference>
<dbReference type="PANTHER" id="PTHR30562:SF1">
    <property type="entry name" value="UVRABC SYSTEM PROTEIN C"/>
    <property type="match status" value="1"/>
</dbReference>
<dbReference type="PANTHER" id="PTHR30562">
    <property type="entry name" value="UVRC/OXIDOREDUCTASE"/>
    <property type="match status" value="1"/>
</dbReference>
<dbReference type="Pfam" id="PF01541">
    <property type="entry name" value="GIY-YIG"/>
    <property type="match status" value="1"/>
</dbReference>
<dbReference type="Pfam" id="PF02151">
    <property type="entry name" value="UVR"/>
    <property type="match status" value="1"/>
</dbReference>
<dbReference type="Pfam" id="PF22920">
    <property type="entry name" value="UvrC_RNaseH"/>
    <property type="match status" value="1"/>
</dbReference>
<dbReference type="Pfam" id="PF08459">
    <property type="entry name" value="UvrC_RNaseH_dom"/>
    <property type="match status" value="1"/>
</dbReference>
<dbReference type="SMART" id="SM00465">
    <property type="entry name" value="GIYc"/>
    <property type="match status" value="1"/>
</dbReference>
<dbReference type="SUPFAM" id="SSF46600">
    <property type="entry name" value="C-terminal UvrC-binding domain of UvrB"/>
    <property type="match status" value="1"/>
</dbReference>
<dbReference type="SUPFAM" id="SSF82771">
    <property type="entry name" value="GIY-YIG endonuclease"/>
    <property type="match status" value="1"/>
</dbReference>
<dbReference type="SUPFAM" id="SSF47781">
    <property type="entry name" value="RuvA domain 2-like"/>
    <property type="match status" value="1"/>
</dbReference>
<dbReference type="PROSITE" id="PS50164">
    <property type="entry name" value="GIY_YIG"/>
    <property type="match status" value="1"/>
</dbReference>
<dbReference type="PROSITE" id="PS50151">
    <property type="entry name" value="UVR"/>
    <property type="match status" value="1"/>
</dbReference>
<dbReference type="PROSITE" id="PS50165">
    <property type="entry name" value="UVRC"/>
    <property type="match status" value="1"/>
</dbReference>
<protein>
    <recommendedName>
        <fullName evidence="1">UvrABC system protein C</fullName>
        <shortName evidence="1">Protein UvrC</shortName>
    </recommendedName>
    <alternativeName>
        <fullName evidence="1">Excinuclease ABC subunit C</fullName>
    </alternativeName>
</protein>
<comment type="function">
    <text evidence="1">The UvrABC repair system catalyzes the recognition and processing of DNA lesions. UvrC both incises the 5' and 3' sides of the lesion. The N-terminal half is responsible for the 3' incision and the C-terminal half is responsible for the 5' incision.</text>
</comment>
<comment type="subunit">
    <text evidence="1">Interacts with UvrB in an incision complex.</text>
</comment>
<comment type="subcellular location">
    <subcellularLocation>
        <location evidence="1">Cytoplasm</location>
    </subcellularLocation>
</comment>
<comment type="similarity">
    <text evidence="1">Belongs to the UvrC family.</text>
</comment>
<feature type="chain" id="PRO_1000077847" description="UvrABC system protein C">
    <location>
        <begin position="1"/>
        <end position="593"/>
    </location>
</feature>
<feature type="domain" description="GIY-YIG" evidence="1">
    <location>
        <begin position="17"/>
        <end position="94"/>
    </location>
</feature>
<feature type="domain" description="UVR" evidence="1">
    <location>
        <begin position="199"/>
        <end position="234"/>
    </location>
</feature>
<reference key="1">
    <citation type="submission" date="2007-05" db="EMBL/GenBank/DDBJ databases">
        <title>Complete sequence of chromosome of Staphylococcus aureus subsp. aureus JH9.</title>
        <authorList>
            <consortium name="US DOE Joint Genome Institute"/>
            <person name="Copeland A."/>
            <person name="Lucas S."/>
            <person name="Lapidus A."/>
            <person name="Barry K."/>
            <person name="Detter J.C."/>
            <person name="Glavina del Rio T."/>
            <person name="Hammon N."/>
            <person name="Israni S."/>
            <person name="Pitluck S."/>
            <person name="Chain P."/>
            <person name="Malfatti S."/>
            <person name="Shin M."/>
            <person name="Vergez L."/>
            <person name="Schmutz J."/>
            <person name="Larimer F."/>
            <person name="Land M."/>
            <person name="Hauser L."/>
            <person name="Kyrpides N."/>
            <person name="Kim E."/>
            <person name="Tomasz A."/>
            <person name="Richardson P."/>
        </authorList>
    </citation>
    <scope>NUCLEOTIDE SEQUENCE [LARGE SCALE GENOMIC DNA]</scope>
    <source>
        <strain>JH9</strain>
    </source>
</reference>
<evidence type="ECO:0000255" key="1">
    <source>
        <dbReference type="HAMAP-Rule" id="MF_00203"/>
    </source>
</evidence>